<reference key="1">
    <citation type="journal article" date="2002" name="Proc. Natl. Acad. Sci. U.S.A.">
        <title>Extensive mosaic structure revealed by the complete genome sequence of uropathogenic Escherichia coli.</title>
        <authorList>
            <person name="Welch R.A."/>
            <person name="Burland V."/>
            <person name="Plunkett G. III"/>
            <person name="Redford P."/>
            <person name="Roesch P."/>
            <person name="Rasko D."/>
            <person name="Buckles E.L."/>
            <person name="Liou S.-R."/>
            <person name="Boutin A."/>
            <person name="Hackett J."/>
            <person name="Stroud D."/>
            <person name="Mayhew G.F."/>
            <person name="Rose D.J."/>
            <person name="Zhou S."/>
            <person name="Schwartz D.C."/>
            <person name="Perna N.T."/>
            <person name="Mobley H.L.T."/>
            <person name="Donnenberg M.S."/>
            <person name="Blattner F.R."/>
        </authorList>
    </citation>
    <scope>NUCLEOTIDE SEQUENCE [LARGE SCALE GENOMIC DNA]</scope>
    <source>
        <strain>CFT073 / ATCC 700928 / UPEC</strain>
    </source>
</reference>
<comment type="function">
    <text evidence="1">Involved in base excision repair of DNA damaged by oxidation or by mutagenic agents. Acts as a DNA glycosylase that recognizes and removes damaged bases. Has a preference for oxidized pyrimidines, such as thymine glycol, 5,6-dihydrouracil and 5,6-dihydrothymine. Has AP (apurinic/apyrimidinic) lyase activity and introduces nicks in the DNA strand. Cleaves the DNA backbone by beta-delta elimination to generate a single-strand break at the site of the removed base with both 3'- and 5'-phosphates.</text>
</comment>
<comment type="catalytic activity">
    <reaction evidence="1">
        <text>2'-deoxyribonucleotide-(2'-deoxyribose 5'-phosphate)-2'-deoxyribonucleotide-DNA = a 3'-end 2'-deoxyribonucleotide-(2,3-dehydro-2,3-deoxyribose 5'-phosphate)-DNA + a 5'-end 5'-phospho-2'-deoxyribonucleoside-DNA + H(+)</text>
        <dbReference type="Rhea" id="RHEA:66592"/>
        <dbReference type="Rhea" id="RHEA-COMP:13180"/>
        <dbReference type="Rhea" id="RHEA-COMP:16897"/>
        <dbReference type="Rhea" id="RHEA-COMP:17067"/>
        <dbReference type="ChEBI" id="CHEBI:15378"/>
        <dbReference type="ChEBI" id="CHEBI:136412"/>
        <dbReference type="ChEBI" id="CHEBI:157695"/>
        <dbReference type="ChEBI" id="CHEBI:167181"/>
        <dbReference type="EC" id="4.2.99.18"/>
    </reaction>
</comment>
<comment type="cofactor">
    <cofactor evidence="1">
        <name>Zn(2+)</name>
        <dbReference type="ChEBI" id="CHEBI:29105"/>
    </cofactor>
    <text evidence="1">Binds 1 zinc ion per subunit.</text>
</comment>
<comment type="similarity">
    <text evidence="1">Belongs to the FPG family.</text>
</comment>
<organism>
    <name type="scientific">Escherichia coli O6:H1 (strain CFT073 / ATCC 700928 / UPEC)</name>
    <dbReference type="NCBI Taxonomy" id="199310"/>
    <lineage>
        <taxon>Bacteria</taxon>
        <taxon>Pseudomonadati</taxon>
        <taxon>Pseudomonadota</taxon>
        <taxon>Gammaproteobacteria</taxon>
        <taxon>Enterobacterales</taxon>
        <taxon>Enterobacteriaceae</taxon>
        <taxon>Escherichia</taxon>
    </lineage>
</organism>
<accession>Q8FJU5</accession>
<evidence type="ECO:0000255" key="1">
    <source>
        <dbReference type="HAMAP-Rule" id="MF_01253"/>
    </source>
</evidence>
<dbReference type="EC" id="3.2.2.-" evidence="1"/>
<dbReference type="EC" id="4.2.99.18" evidence="1"/>
<dbReference type="EMBL" id="AE014075">
    <property type="protein sequence ID" value="AAN79266.1"/>
    <property type="molecule type" value="Genomic_DNA"/>
</dbReference>
<dbReference type="RefSeq" id="WP_001114006.1">
    <property type="nucleotide sequence ID" value="NZ_CP051263.1"/>
</dbReference>
<dbReference type="SMR" id="Q8FJU5"/>
<dbReference type="STRING" id="199310.c0793"/>
<dbReference type="KEGG" id="ecc:c0793"/>
<dbReference type="eggNOG" id="COG0266">
    <property type="taxonomic scope" value="Bacteria"/>
</dbReference>
<dbReference type="HOGENOM" id="CLU_038423_2_2_6"/>
<dbReference type="BioCyc" id="ECOL199310:C0793-MONOMER"/>
<dbReference type="Proteomes" id="UP000001410">
    <property type="component" value="Chromosome"/>
</dbReference>
<dbReference type="GO" id="GO:0140078">
    <property type="term" value="F:class I DNA-(apurinic or apyrimidinic site) endonuclease activity"/>
    <property type="evidence" value="ECO:0007669"/>
    <property type="project" value="UniProtKB-EC"/>
</dbReference>
<dbReference type="GO" id="GO:0003684">
    <property type="term" value="F:damaged DNA binding"/>
    <property type="evidence" value="ECO:0007669"/>
    <property type="project" value="InterPro"/>
</dbReference>
<dbReference type="GO" id="GO:0000703">
    <property type="term" value="F:oxidized pyrimidine nucleobase lesion DNA N-glycosylase activity"/>
    <property type="evidence" value="ECO:0007669"/>
    <property type="project" value="UniProtKB-UniRule"/>
</dbReference>
<dbReference type="GO" id="GO:0008270">
    <property type="term" value="F:zinc ion binding"/>
    <property type="evidence" value="ECO:0007669"/>
    <property type="project" value="UniProtKB-UniRule"/>
</dbReference>
<dbReference type="GO" id="GO:0006284">
    <property type="term" value="P:base-excision repair"/>
    <property type="evidence" value="ECO:0007669"/>
    <property type="project" value="InterPro"/>
</dbReference>
<dbReference type="CDD" id="cd08965">
    <property type="entry name" value="EcNei-like_N"/>
    <property type="match status" value="1"/>
</dbReference>
<dbReference type="FunFam" id="1.10.8.50:FF:000005">
    <property type="entry name" value="Endonuclease 8"/>
    <property type="match status" value="1"/>
</dbReference>
<dbReference type="FunFam" id="3.20.190.10:FF:000002">
    <property type="entry name" value="Endonuclease 8"/>
    <property type="match status" value="1"/>
</dbReference>
<dbReference type="Gene3D" id="1.10.8.50">
    <property type="match status" value="1"/>
</dbReference>
<dbReference type="Gene3D" id="3.20.190.10">
    <property type="entry name" value="MutM-like, N-terminal"/>
    <property type="match status" value="1"/>
</dbReference>
<dbReference type="HAMAP" id="MF_01253">
    <property type="entry name" value="Endonuclease_8"/>
    <property type="match status" value="1"/>
</dbReference>
<dbReference type="InterPro" id="IPR015886">
    <property type="entry name" value="DNA_glyclase/AP_lyase_DNA-bd"/>
</dbReference>
<dbReference type="InterPro" id="IPR015887">
    <property type="entry name" value="DNA_glyclase_Znf_dom_DNA_BS"/>
</dbReference>
<dbReference type="InterPro" id="IPR044091">
    <property type="entry name" value="EcNei-like_N"/>
</dbReference>
<dbReference type="InterPro" id="IPR023713">
    <property type="entry name" value="Endonuclease-VIII"/>
</dbReference>
<dbReference type="InterPro" id="IPR012319">
    <property type="entry name" value="FPG_cat"/>
</dbReference>
<dbReference type="InterPro" id="IPR035937">
    <property type="entry name" value="MutM-like_N-ter"/>
</dbReference>
<dbReference type="InterPro" id="IPR010979">
    <property type="entry name" value="Ribosomal_uS13-like_H2TH"/>
</dbReference>
<dbReference type="InterPro" id="IPR000214">
    <property type="entry name" value="Znf_DNA_glyclase/AP_lyase"/>
</dbReference>
<dbReference type="InterPro" id="IPR010663">
    <property type="entry name" value="Znf_FPG/IleRS"/>
</dbReference>
<dbReference type="NCBIfam" id="NF007763">
    <property type="entry name" value="PRK10445.1"/>
    <property type="match status" value="1"/>
</dbReference>
<dbReference type="PANTHER" id="PTHR42697">
    <property type="entry name" value="ENDONUCLEASE 8"/>
    <property type="match status" value="1"/>
</dbReference>
<dbReference type="PANTHER" id="PTHR42697:SF1">
    <property type="entry name" value="ENDONUCLEASE 8"/>
    <property type="match status" value="1"/>
</dbReference>
<dbReference type="Pfam" id="PF01149">
    <property type="entry name" value="Fapy_DNA_glyco"/>
    <property type="match status" value="1"/>
</dbReference>
<dbReference type="Pfam" id="PF06831">
    <property type="entry name" value="H2TH"/>
    <property type="match status" value="1"/>
</dbReference>
<dbReference type="Pfam" id="PF06827">
    <property type="entry name" value="zf-FPG_IleRS"/>
    <property type="match status" value="1"/>
</dbReference>
<dbReference type="SMART" id="SM00898">
    <property type="entry name" value="Fapy_DNA_glyco"/>
    <property type="match status" value="1"/>
</dbReference>
<dbReference type="SMART" id="SM01232">
    <property type="entry name" value="H2TH"/>
    <property type="match status" value="1"/>
</dbReference>
<dbReference type="SUPFAM" id="SSF57716">
    <property type="entry name" value="Glucocorticoid receptor-like (DNA-binding domain)"/>
    <property type="match status" value="1"/>
</dbReference>
<dbReference type="SUPFAM" id="SSF81624">
    <property type="entry name" value="N-terminal domain of MutM-like DNA repair proteins"/>
    <property type="match status" value="1"/>
</dbReference>
<dbReference type="SUPFAM" id="SSF46946">
    <property type="entry name" value="S13-like H2TH domain"/>
    <property type="match status" value="1"/>
</dbReference>
<dbReference type="PROSITE" id="PS51068">
    <property type="entry name" value="FPG_CAT"/>
    <property type="match status" value="1"/>
</dbReference>
<dbReference type="PROSITE" id="PS01242">
    <property type="entry name" value="ZF_FPG_1"/>
    <property type="match status" value="1"/>
</dbReference>
<dbReference type="PROSITE" id="PS51066">
    <property type="entry name" value="ZF_FPG_2"/>
    <property type="match status" value="1"/>
</dbReference>
<proteinExistence type="inferred from homology"/>
<feature type="initiator methionine" description="Removed" evidence="1">
    <location>
        <position position="1"/>
    </location>
</feature>
<feature type="chain" id="PRO_0000170894" description="Endonuclease 8">
    <location>
        <begin position="2"/>
        <end position="263"/>
    </location>
</feature>
<feature type="zinc finger region" description="FPG-type" evidence="1">
    <location>
        <begin position="229"/>
        <end position="263"/>
    </location>
</feature>
<feature type="active site" description="Schiff-base intermediate with DNA" evidence="1">
    <location>
        <position position="2"/>
    </location>
</feature>
<feature type="active site" description="Proton donor" evidence="1">
    <location>
        <position position="3"/>
    </location>
</feature>
<feature type="active site" description="Proton donor; for beta-elimination activity" evidence="1">
    <location>
        <position position="53"/>
    </location>
</feature>
<feature type="active site" description="Proton donor; for delta-elimination activity" evidence="1">
    <location>
        <position position="253"/>
    </location>
</feature>
<feature type="binding site" evidence="1">
    <location>
        <position position="70"/>
    </location>
    <ligand>
        <name>DNA</name>
        <dbReference type="ChEBI" id="CHEBI:16991"/>
    </ligand>
</feature>
<feature type="binding site" evidence="1">
    <location>
        <position position="125"/>
    </location>
    <ligand>
        <name>DNA</name>
        <dbReference type="ChEBI" id="CHEBI:16991"/>
    </ligand>
</feature>
<feature type="binding site" evidence="1">
    <location>
        <position position="169"/>
    </location>
    <ligand>
        <name>DNA</name>
        <dbReference type="ChEBI" id="CHEBI:16991"/>
    </ligand>
</feature>
<sequence>MPEGPEIRRAADNLEAAIKGKPLTDVWFAFPQLKSYQSRLIGQHVTHVETRGKALLTHFSNDLTLYSHNQLYGVWRVVDTGEEPQTTRVLRVKLQTADKTILLYSASDIEMLTPEQLTTHPFLQRVGPDVLDPNLTPEVVKERLLSPRFRNRQFAGLLLDQAFLAGLGNYLRVEILWQVGLTGNHKAKDLNAAQLDALAHALLDIPRLSYATRGQVDENKYHGALFRFKVFHRDGEPCERCGGIIEKTTLSSRPFYWCPGCQH</sequence>
<gene>
    <name evidence="1" type="primary">nei</name>
    <name type="ordered locus">c0793</name>
</gene>
<name>END8_ECOL6</name>
<protein>
    <recommendedName>
        <fullName evidence="1">Endonuclease 8</fullName>
    </recommendedName>
    <alternativeName>
        <fullName evidence="1">DNA glycosylase/AP lyase Nei</fullName>
        <ecNumber evidence="1">3.2.2.-</ecNumber>
        <ecNumber evidence="1">4.2.99.18</ecNumber>
    </alternativeName>
    <alternativeName>
        <fullName evidence="1">DNA-(apurinic or apyrimidinic site) lyase Nei</fullName>
    </alternativeName>
    <alternativeName>
        <fullName evidence="1">Endonuclease VIII</fullName>
    </alternativeName>
</protein>
<keyword id="KW-0227">DNA damage</keyword>
<keyword id="KW-0234">DNA repair</keyword>
<keyword id="KW-0238">DNA-binding</keyword>
<keyword id="KW-0326">Glycosidase</keyword>
<keyword id="KW-0378">Hydrolase</keyword>
<keyword id="KW-0456">Lyase</keyword>
<keyword id="KW-0479">Metal-binding</keyword>
<keyword id="KW-0511">Multifunctional enzyme</keyword>
<keyword id="KW-1185">Reference proteome</keyword>
<keyword id="KW-0862">Zinc</keyword>
<keyword id="KW-0863">Zinc-finger</keyword>